<accession>Q6F0K8</accession>
<protein>
    <recommendedName>
        <fullName evidence="1">Large ribosomal subunit protein uL1</fullName>
    </recommendedName>
    <alternativeName>
        <fullName evidence="2">50S ribosomal protein L1</fullName>
    </alternativeName>
</protein>
<dbReference type="EMBL" id="AE017263">
    <property type="protein sequence ID" value="AAT75965.1"/>
    <property type="molecule type" value="Genomic_DNA"/>
</dbReference>
<dbReference type="RefSeq" id="WP_011183505.1">
    <property type="nucleotide sequence ID" value="NC_006055.1"/>
</dbReference>
<dbReference type="RefSeq" id="YP_053849.1">
    <property type="nucleotide sequence ID" value="NC_006055.1"/>
</dbReference>
<dbReference type="SMR" id="Q6F0K8"/>
<dbReference type="STRING" id="265311.Mfl608"/>
<dbReference type="PaxDb" id="265311-Mfl608"/>
<dbReference type="EnsemblBacteria" id="AAT75965">
    <property type="protein sequence ID" value="AAT75965"/>
    <property type="gene ID" value="Mfl608"/>
</dbReference>
<dbReference type="GeneID" id="2898262"/>
<dbReference type="KEGG" id="mfl:Mfl608"/>
<dbReference type="PATRIC" id="fig|265311.5.peg.611"/>
<dbReference type="eggNOG" id="COG0081">
    <property type="taxonomic scope" value="Bacteria"/>
</dbReference>
<dbReference type="HOGENOM" id="CLU_062853_0_0_14"/>
<dbReference type="OrthoDB" id="9803740at2"/>
<dbReference type="Proteomes" id="UP000006647">
    <property type="component" value="Chromosome"/>
</dbReference>
<dbReference type="GO" id="GO:0015934">
    <property type="term" value="C:large ribosomal subunit"/>
    <property type="evidence" value="ECO:0007669"/>
    <property type="project" value="InterPro"/>
</dbReference>
<dbReference type="GO" id="GO:0019843">
    <property type="term" value="F:rRNA binding"/>
    <property type="evidence" value="ECO:0007669"/>
    <property type="project" value="UniProtKB-UniRule"/>
</dbReference>
<dbReference type="GO" id="GO:0003735">
    <property type="term" value="F:structural constituent of ribosome"/>
    <property type="evidence" value="ECO:0007669"/>
    <property type="project" value="InterPro"/>
</dbReference>
<dbReference type="GO" id="GO:0000049">
    <property type="term" value="F:tRNA binding"/>
    <property type="evidence" value="ECO:0007669"/>
    <property type="project" value="UniProtKB-KW"/>
</dbReference>
<dbReference type="GO" id="GO:0006417">
    <property type="term" value="P:regulation of translation"/>
    <property type="evidence" value="ECO:0007669"/>
    <property type="project" value="UniProtKB-KW"/>
</dbReference>
<dbReference type="GO" id="GO:0006412">
    <property type="term" value="P:translation"/>
    <property type="evidence" value="ECO:0007669"/>
    <property type="project" value="UniProtKB-UniRule"/>
</dbReference>
<dbReference type="CDD" id="cd00403">
    <property type="entry name" value="Ribosomal_L1"/>
    <property type="match status" value="1"/>
</dbReference>
<dbReference type="FunFam" id="3.40.50.790:FF:000001">
    <property type="entry name" value="50S ribosomal protein L1"/>
    <property type="match status" value="1"/>
</dbReference>
<dbReference type="Gene3D" id="3.30.190.20">
    <property type="match status" value="1"/>
</dbReference>
<dbReference type="Gene3D" id="3.40.50.790">
    <property type="match status" value="1"/>
</dbReference>
<dbReference type="HAMAP" id="MF_01318_B">
    <property type="entry name" value="Ribosomal_uL1_B"/>
    <property type="match status" value="1"/>
</dbReference>
<dbReference type="InterPro" id="IPR005878">
    <property type="entry name" value="Ribosom_uL1_bac-type"/>
</dbReference>
<dbReference type="InterPro" id="IPR002143">
    <property type="entry name" value="Ribosomal_uL1"/>
</dbReference>
<dbReference type="InterPro" id="IPR023674">
    <property type="entry name" value="Ribosomal_uL1-like"/>
</dbReference>
<dbReference type="InterPro" id="IPR028364">
    <property type="entry name" value="Ribosomal_uL1/biogenesis"/>
</dbReference>
<dbReference type="InterPro" id="IPR016095">
    <property type="entry name" value="Ribosomal_uL1_3-a/b-sand"/>
</dbReference>
<dbReference type="InterPro" id="IPR023673">
    <property type="entry name" value="Ribosomal_uL1_CS"/>
</dbReference>
<dbReference type="NCBIfam" id="TIGR01169">
    <property type="entry name" value="rplA_bact"/>
    <property type="match status" value="1"/>
</dbReference>
<dbReference type="PANTHER" id="PTHR36427">
    <property type="entry name" value="54S RIBOSOMAL PROTEIN L1, MITOCHONDRIAL"/>
    <property type="match status" value="1"/>
</dbReference>
<dbReference type="PANTHER" id="PTHR36427:SF3">
    <property type="entry name" value="LARGE RIBOSOMAL SUBUNIT PROTEIN UL1M"/>
    <property type="match status" value="1"/>
</dbReference>
<dbReference type="Pfam" id="PF00687">
    <property type="entry name" value="Ribosomal_L1"/>
    <property type="match status" value="1"/>
</dbReference>
<dbReference type="PIRSF" id="PIRSF002155">
    <property type="entry name" value="Ribosomal_L1"/>
    <property type="match status" value="1"/>
</dbReference>
<dbReference type="SUPFAM" id="SSF56808">
    <property type="entry name" value="Ribosomal protein L1"/>
    <property type="match status" value="1"/>
</dbReference>
<dbReference type="PROSITE" id="PS01199">
    <property type="entry name" value="RIBOSOMAL_L1"/>
    <property type="match status" value="1"/>
</dbReference>
<organism>
    <name type="scientific">Mesoplasma florum (strain ATCC 33453 / NBRC 100688 / NCTC 11704 / L1)</name>
    <name type="common">Acholeplasma florum</name>
    <dbReference type="NCBI Taxonomy" id="265311"/>
    <lineage>
        <taxon>Bacteria</taxon>
        <taxon>Bacillati</taxon>
        <taxon>Mycoplasmatota</taxon>
        <taxon>Mollicutes</taxon>
        <taxon>Entomoplasmatales</taxon>
        <taxon>Entomoplasmataceae</taxon>
        <taxon>Mesoplasma</taxon>
    </lineage>
</organism>
<feature type="chain" id="PRO_0000125684" description="Large ribosomal subunit protein uL1">
    <location>
        <begin position="1"/>
        <end position="227"/>
    </location>
</feature>
<proteinExistence type="inferred from homology"/>
<sequence>MAKISKRMKSVKGLVDKQKVYALDEAIKLAKETSTTKFDSTVELSFNLNIDPRKADQQIRGALVLPAGTGKTQKVLVLTNTKVKEAQDAGADFVGGEELITKIQKENWFEFDVIVATPEMMAKLGAIGKVLGPKGLMPNPKTGTVTMDVAKAIDEIKKGKIEFRADKEGNIHTIIGKASFTAEQLKENFTTILNEMKRVKPQTVKGDYIINITISTTMGPGIKVEIN</sequence>
<gene>
    <name evidence="1" type="primary">rplA</name>
    <name type="ordered locus">Mfl608</name>
</gene>
<comment type="function">
    <text evidence="1">Binds directly to 23S rRNA. The L1 stalk is quite mobile in the ribosome, and is involved in E site tRNA release.</text>
</comment>
<comment type="function">
    <text evidence="1">Protein L1 is also a translational repressor protein, it controls the translation of the L11 operon by binding to its mRNA.</text>
</comment>
<comment type="subunit">
    <text evidence="1">Part of the 50S ribosomal subunit.</text>
</comment>
<comment type="similarity">
    <text evidence="1">Belongs to the universal ribosomal protein uL1 family.</text>
</comment>
<evidence type="ECO:0000255" key="1">
    <source>
        <dbReference type="HAMAP-Rule" id="MF_01318"/>
    </source>
</evidence>
<evidence type="ECO:0000305" key="2"/>
<reference key="1">
    <citation type="submission" date="2004-06" db="EMBL/GenBank/DDBJ databases">
        <authorList>
            <person name="Birren B.W."/>
            <person name="Stange-Thomann N."/>
            <person name="Hafez N."/>
            <person name="DeCaprio D."/>
            <person name="Fisher S."/>
            <person name="Butler J."/>
            <person name="Elkins T."/>
            <person name="Kodira C.D."/>
            <person name="Major J."/>
            <person name="Wang S."/>
            <person name="Nicol R."/>
            <person name="Nusbaum C."/>
        </authorList>
    </citation>
    <scope>NUCLEOTIDE SEQUENCE [LARGE SCALE GENOMIC DNA]</scope>
    <source>
        <strain>ATCC 33453 / NBRC 100688 / NCTC 11704 / L1</strain>
    </source>
</reference>
<name>RL1_MESFL</name>
<keyword id="KW-1185">Reference proteome</keyword>
<keyword id="KW-0678">Repressor</keyword>
<keyword id="KW-0687">Ribonucleoprotein</keyword>
<keyword id="KW-0689">Ribosomal protein</keyword>
<keyword id="KW-0694">RNA-binding</keyword>
<keyword id="KW-0699">rRNA-binding</keyword>
<keyword id="KW-0810">Translation regulation</keyword>
<keyword id="KW-0820">tRNA-binding</keyword>